<sequence length="189" mass="21594">MTEYKLVVVGAGGVGKSALTIQLIQNHFVDEYDPTIEDSYRKQVVIDGETCLLDILDTAGQEEYSAMRDQYMRTGEGFLLVFAVNSAKSFEDIGTYREQIKRVKDAEEVPMVLVGNKCDLASWNVNNEQAREVAKQYGIPYIETSAKTRMGVDDAFYTLVREIRKDKDNKGRRGRKMNKPNRRFKCKML</sequence>
<organism>
    <name type="scientific">Drosophila yakuba</name>
    <name type="common">Fruit fly</name>
    <dbReference type="NCBI Taxonomy" id="7245"/>
    <lineage>
        <taxon>Eukaryota</taxon>
        <taxon>Metazoa</taxon>
        <taxon>Ecdysozoa</taxon>
        <taxon>Arthropoda</taxon>
        <taxon>Hexapoda</taxon>
        <taxon>Insecta</taxon>
        <taxon>Pterygota</taxon>
        <taxon>Neoptera</taxon>
        <taxon>Endopterygota</taxon>
        <taxon>Diptera</taxon>
        <taxon>Brachycera</taxon>
        <taxon>Muscomorpha</taxon>
        <taxon>Ephydroidea</taxon>
        <taxon>Drosophilidae</taxon>
        <taxon>Drosophila</taxon>
        <taxon>Sophophora</taxon>
    </lineage>
</organism>
<proteinExistence type="inferred from homology"/>
<evidence type="ECO:0000250" key="1">
    <source>
        <dbReference type="UniProtKB" id="P01112"/>
    </source>
</evidence>
<evidence type="ECO:0000250" key="2">
    <source>
        <dbReference type="UniProtKB" id="P08646"/>
    </source>
</evidence>
<evidence type="ECO:0000255" key="3"/>
<evidence type="ECO:0000312" key="4">
    <source>
        <dbReference type="EMBL" id="EDW96662.1"/>
    </source>
</evidence>
<dbReference type="EC" id="3.6.5.2" evidence="1"/>
<dbReference type="EMBL" id="CM000160">
    <property type="protein sequence ID" value="EDW96662.1"/>
    <property type="molecule type" value="Genomic_DNA"/>
</dbReference>
<dbReference type="SMR" id="B4PUP5"/>
<dbReference type="EnsemblMetazoa" id="FBtr0271289">
    <property type="protein sequence ID" value="FBpp0269781"/>
    <property type="gene ID" value="FBgn0241874"/>
</dbReference>
<dbReference type="EnsemblMetazoa" id="XM_002096914.4">
    <property type="protein sequence ID" value="XP_002096950.1"/>
    <property type="gene ID" value="LOC6536368"/>
</dbReference>
<dbReference type="GeneID" id="6536368"/>
<dbReference type="KEGG" id="dya:Dyak_GE24771"/>
<dbReference type="CTD" id="41140"/>
<dbReference type="eggNOG" id="KOG0395">
    <property type="taxonomic scope" value="Eukaryota"/>
</dbReference>
<dbReference type="HOGENOM" id="CLU_041217_9_8_1"/>
<dbReference type="OMA" id="CCGGCVI"/>
<dbReference type="OrthoDB" id="5976022at2759"/>
<dbReference type="PhylomeDB" id="B4PUP5"/>
<dbReference type="ChiTaRS" id="Ras85D">
    <property type="organism name" value="fly"/>
</dbReference>
<dbReference type="Proteomes" id="UP000002282">
    <property type="component" value="Chromosome 3R"/>
</dbReference>
<dbReference type="GO" id="GO:0016020">
    <property type="term" value="C:membrane"/>
    <property type="evidence" value="ECO:0000250"/>
    <property type="project" value="UniProtKB"/>
</dbReference>
<dbReference type="GO" id="GO:0005886">
    <property type="term" value="C:plasma membrane"/>
    <property type="evidence" value="ECO:0007669"/>
    <property type="project" value="UniProtKB-SubCell"/>
</dbReference>
<dbReference type="GO" id="GO:0003925">
    <property type="term" value="F:G protein activity"/>
    <property type="evidence" value="ECO:0007669"/>
    <property type="project" value="UniProtKB-EC"/>
</dbReference>
<dbReference type="GO" id="GO:0005525">
    <property type="term" value="F:GTP binding"/>
    <property type="evidence" value="ECO:0007669"/>
    <property type="project" value="UniProtKB-KW"/>
</dbReference>
<dbReference type="GO" id="GO:0043539">
    <property type="term" value="F:protein serine/threonine kinase activator activity"/>
    <property type="evidence" value="ECO:0007669"/>
    <property type="project" value="EnsemblMetazoa"/>
</dbReference>
<dbReference type="GO" id="GO:0007298">
    <property type="term" value="P:border follicle cell migration"/>
    <property type="evidence" value="ECO:0007669"/>
    <property type="project" value="EnsemblMetazoa"/>
</dbReference>
<dbReference type="GO" id="GO:0009267">
    <property type="term" value="P:cellular response to starvation"/>
    <property type="evidence" value="ECO:0007669"/>
    <property type="project" value="EnsemblMetazoa"/>
</dbReference>
<dbReference type="GO" id="GO:0030381">
    <property type="term" value="P:chorion-containing eggshell pattern formation"/>
    <property type="evidence" value="ECO:0007669"/>
    <property type="project" value="EnsemblMetazoa"/>
</dbReference>
<dbReference type="GO" id="GO:0051607">
    <property type="term" value="P:defense response to virus"/>
    <property type="evidence" value="ECO:0007669"/>
    <property type="project" value="EnsemblMetazoa"/>
</dbReference>
<dbReference type="GO" id="GO:0008340">
    <property type="term" value="P:determination of adult lifespan"/>
    <property type="evidence" value="ECO:0007669"/>
    <property type="project" value="EnsemblMetazoa"/>
</dbReference>
<dbReference type="GO" id="GO:0007395">
    <property type="term" value="P:dorsal closure, spreading of leading edge cells"/>
    <property type="evidence" value="ECO:0007669"/>
    <property type="project" value="EnsemblMetazoa"/>
</dbReference>
<dbReference type="GO" id="GO:0007173">
    <property type="term" value="P:epidermal growth factor receptor signaling pathway"/>
    <property type="evidence" value="ECO:0007669"/>
    <property type="project" value="EnsemblMetazoa"/>
</dbReference>
<dbReference type="GO" id="GO:0007427">
    <property type="term" value="P:epithelial cell migration, open tracheal system"/>
    <property type="evidence" value="ECO:0007669"/>
    <property type="project" value="EnsemblMetazoa"/>
</dbReference>
<dbReference type="GO" id="GO:0035088">
    <property type="term" value="P:establishment or maintenance of apical/basal cell polarity"/>
    <property type="evidence" value="ECO:0007669"/>
    <property type="project" value="EnsemblMetazoa"/>
</dbReference>
<dbReference type="GO" id="GO:0007455">
    <property type="term" value="P:eye-antennal disc morphogenesis"/>
    <property type="evidence" value="ECO:0007669"/>
    <property type="project" value="EnsemblMetazoa"/>
</dbReference>
<dbReference type="GO" id="GO:0008543">
    <property type="term" value="P:fibroblast growth factor receptor signaling pathway"/>
    <property type="evidence" value="ECO:0007669"/>
    <property type="project" value="EnsemblMetazoa"/>
</dbReference>
<dbReference type="GO" id="GO:0035099">
    <property type="term" value="P:hemocyte migration"/>
    <property type="evidence" value="ECO:0007669"/>
    <property type="project" value="EnsemblMetazoa"/>
</dbReference>
<dbReference type="GO" id="GO:0008586">
    <property type="term" value="P:imaginal disc-derived wing vein morphogenesis"/>
    <property type="evidence" value="ECO:0007669"/>
    <property type="project" value="EnsemblMetazoa"/>
</dbReference>
<dbReference type="GO" id="GO:0007474">
    <property type="term" value="P:imaginal disc-derived wing vein specification"/>
    <property type="evidence" value="ECO:0007669"/>
    <property type="project" value="EnsemblMetazoa"/>
</dbReference>
<dbReference type="GO" id="GO:0002168">
    <property type="term" value="P:instar larval development"/>
    <property type="evidence" value="ECO:0007669"/>
    <property type="project" value="EnsemblMetazoa"/>
</dbReference>
<dbReference type="GO" id="GO:0036335">
    <property type="term" value="P:intestinal stem cell homeostasis"/>
    <property type="evidence" value="ECO:0007669"/>
    <property type="project" value="EnsemblMetazoa"/>
</dbReference>
<dbReference type="GO" id="GO:0007479">
    <property type="term" value="P:leg disc proximal/distal pattern formation"/>
    <property type="evidence" value="ECO:0007669"/>
    <property type="project" value="EnsemblMetazoa"/>
</dbReference>
<dbReference type="GO" id="GO:0035170">
    <property type="term" value="P:lymph gland crystal cell differentiation"/>
    <property type="evidence" value="ECO:0007669"/>
    <property type="project" value="EnsemblMetazoa"/>
</dbReference>
<dbReference type="GO" id="GO:0035169">
    <property type="term" value="P:lymph gland plasmatocyte differentiation"/>
    <property type="evidence" value="ECO:0007669"/>
    <property type="project" value="EnsemblMetazoa"/>
</dbReference>
<dbReference type="GO" id="GO:0072002">
    <property type="term" value="P:Malpighian tubule development"/>
    <property type="evidence" value="ECO:0007669"/>
    <property type="project" value="EnsemblMetazoa"/>
</dbReference>
<dbReference type="GO" id="GO:0000165">
    <property type="term" value="P:MAPK cascade"/>
    <property type="evidence" value="ECO:0007669"/>
    <property type="project" value="EnsemblMetazoa"/>
</dbReference>
<dbReference type="GO" id="GO:0001710">
    <property type="term" value="P:mesodermal cell fate commitment"/>
    <property type="evidence" value="ECO:0007669"/>
    <property type="project" value="EnsemblMetazoa"/>
</dbReference>
<dbReference type="GO" id="GO:0048626">
    <property type="term" value="P:myoblast fate specification"/>
    <property type="evidence" value="ECO:0007669"/>
    <property type="project" value="EnsemblMetazoa"/>
</dbReference>
<dbReference type="GO" id="GO:2001234">
    <property type="term" value="P:negative regulation of apoptotic signaling pathway"/>
    <property type="evidence" value="ECO:0007669"/>
    <property type="project" value="EnsemblMetazoa"/>
</dbReference>
<dbReference type="GO" id="GO:0046673">
    <property type="term" value="P:negative regulation of compound eye retinal cell programmed cell death"/>
    <property type="evidence" value="ECO:0007669"/>
    <property type="project" value="EnsemblMetazoa"/>
</dbReference>
<dbReference type="GO" id="GO:0010629">
    <property type="term" value="P:negative regulation of gene expression"/>
    <property type="evidence" value="ECO:0007669"/>
    <property type="project" value="EnsemblMetazoa"/>
</dbReference>
<dbReference type="GO" id="GO:0016242">
    <property type="term" value="P:negative regulation of macroautophagy"/>
    <property type="evidence" value="ECO:0007669"/>
    <property type="project" value="EnsemblMetazoa"/>
</dbReference>
<dbReference type="GO" id="GO:0016318">
    <property type="term" value="P:ommatidial rotation"/>
    <property type="evidence" value="ECO:0007669"/>
    <property type="project" value="EnsemblMetazoa"/>
</dbReference>
<dbReference type="GO" id="GO:0007309">
    <property type="term" value="P:oocyte axis specification"/>
    <property type="evidence" value="ECO:0007669"/>
    <property type="project" value="EnsemblMetazoa"/>
</dbReference>
<dbReference type="GO" id="GO:0007422">
    <property type="term" value="P:peripheral nervous system development"/>
    <property type="evidence" value="ECO:0007669"/>
    <property type="project" value="EnsemblMetazoa"/>
</dbReference>
<dbReference type="GO" id="GO:0043703">
    <property type="term" value="P:photoreceptor cell fate determination"/>
    <property type="evidence" value="ECO:0007669"/>
    <property type="project" value="EnsemblMetazoa"/>
</dbReference>
<dbReference type="GO" id="GO:0008594">
    <property type="term" value="P:photoreceptor cell morphogenesis"/>
    <property type="evidence" value="ECO:0007669"/>
    <property type="project" value="EnsemblMetazoa"/>
</dbReference>
<dbReference type="GO" id="GO:0045793">
    <property type="term" value="P:positive regulation of cell size"/>
    <property type="evidence" value="ECO:0007669"/>
    <property type="project" value="EnsemblMetazoa"/>
</dbReference>
<dbReference type="GO" id="GO:0070374">
    <property type="term" value="P:positive regulation of ERK1 and ERK2 cascade"/>
    <property type="evidence" value="ECO:0007669"/>
    <property type="project" value="EnsemblMetazoa"/>
</dbReference>
<dbReference type="GO" id="GO:0035208">
    <property type="term" value="P:positive regulation of hemocyte proliferation"/>
    <property type="evidence" value="ECO:0007669"/>
    <property type="project" value="EnsemblMetazoa"/>
</dbReference>
<dbReference type="GO" id="GO:0046534">
    <property type="term" value="P:positive regulation of photoreceptor cell differentiation"/>
    <property type="evidence" value="ECO:0007669"/>
    <property type="project" value="EnsemblMetazoa"/>
</dbReference>
<dbReference type="GO" id="GO:1904263">
    <property type="term" value="P:positive regulation of TORC1 signaling"/>
    <property type="evidence" value="ECO:0007669"/>
    <property type="project" value="EnsemblMetazoa"/>
</dbReference>
<dbReference type="GO" id="GO:0045465">
    <property type="term" value="P:R8 cell differentiation"/>
    <property type="evidence" value="ECO:0007669"/>
    <property type="project" value="EnsemblMetazoa"/>
</dbReference>
<dbReference type="GO" id="GO:0007265">
    <property type="term" value="P:Ras protein signal transduction"/>
    <property type="evidence" value="ECO:0007669"/>
    <property type="project" value="EnsemblMetazoa"/>
</dbReference>
<dbReference type="GO" id="GO:0040014">
    <property type="term" value="P:regulation of multicellular organism growth"/>
    <property type="evidence" value="ECO:0007669"/>
    <property type="project" value="EnsemblMetazoa"/>
</dbReference>
<dbReference type="GO" id="GO:0045500">
    <property type="term" value="P:sevenless signaling pathway"/>
    <property type="evidence" value="ECO:0007669"/>
    <property type="project" value="EnsemblMetazoa"/>
</dbReference>
<dbReference type="GO" id="GO:0048865">
    <property type="term" value="P:stem cell fate commitment"/>
    <property type="evidence" value="ECO:0007669"/>
    <property type="project" value="EnsemblMetazoa"/>
</dbReference>
<dbReference type="GO" id="GO:0072089">
    <property type="term" value="P:stem cell proliferation"/>
    <property type="evidence" value="ECO:0007669"/>
    <property type="project" value="EnsemblMetazoa"/>
</dbReference>
<dbReference type="GO" id="GO:0007430">
    <property type="term" value="P:terminal branching, open tracheal system"/>
    <property type="evidence" value="ECO:0007669"/>
    <property type="project" value="EnsemblMetazoa"/>
</dbReference>
<dbReference type="GO" id="GO:0007362">
    <property type="term" value="P:terminal region determination"/>
    <property type="evidence" value="ECO:0007669"/>
    <property type="project" value="EnsemblMetazoa"/>
</dbReference>
<dbReference type="GO" id="GO:0008293">
    <property type="term" value="P:torso signaling pathway"/>
    <property type="evidence" value="ECO:0007669"/>
    <property type="project" value="EnsemblMetazoa"/>
</dbReference>
<dbReference type="GO" id="GO:0060438">
    <property type="term" value="P:trachea development"/>
    <property type="evidence" value="ECO:0007669"/>
    <property type="project" value="EnsemblMetazoa"/>
</dbReference>
<dbReference type="GO" id="GO:0007426">
    <property type="term" value="P:tracheal outgrowth, open tracheal system"/>
    <property type="evidence" value="ECO:0007669"/>
    <property type="project" value="EnsemblMetazoa"/>
</dbReference>
<dbReference type="GO" id="GO:0048010">
    <property type="term" value="P:vascular endothelial growth factor receptor signaling pathway"/>
    <property type="evidence" value="ECO:0007669"/>
    <property type="project" value="EnsemblMetazoa"/>
</dbReference>
<dbReference type="GO" id="GO:0035313">
    <property type="term" value="P:wound healing, spreading of epidermal cells"/>
    <property type="evidence" value="ECO:0007669"/>
    <property type="project" value="EnsemblMetazoa"/>
</dbReference>
<dbReference type="CDD" id="cd04138">
    <property type="entry name" value="H_N_K_Ras_like"/>
    <property type="match status" value="1"/>
</dbReference>
<dbReference type="FunFam" id="3.40.50.300:FF:000096">
    <property type="entry name" value="KRAS proto-oncogene, GTPase"/>
    <property type="match status" value="1"/>
</dbReference>
<dbReference type="Gene3D" id="3.40.50.300">
    <property type="entry name" value="P-loop containing nucleotide triphosphate hydrolases"/>
    <property type="match status" value="1"/>
</dbReference>
<dbReference type="InterPro" id="IPR027417">
    <property type="entry name" value="P-loop_NTPase"/>
</dbReference>
<dbReference type="InterPro" id="IPR005225">
    <property type="entry name" value="Small_GTP-bd"/>
</dbReference>
<dbReference type="InterPro" id="IPR001806">
    <property type="entry name" value="Small_GTPase"/>
</dbReference>
<dbReference type="InterPro" id="IPR020849">
    <property type="entry name" value="Small_GTPase_Ras-type"/>
</dbReference>
<dbReference type="NCBIfam" id="TIGR00231">
    <property type="entry name" value="small_GTP"/>
    <property type="match status" value="1"/>
</dbReference>
<dbReference type="PANTHER" id="PTHR24070">
    <property type="entry name" value="RAS, DI-RAS, AND RHEB FAMILY MEMBERS OF SMALL GTPASE SUPERFAMILY"/>
    <property type="match status" value="1"/>
</dbReference>
<dbReference type="Pfam" id="PF00071">
    <property type="entry name" value="Ras"/>
    <property type="match status" value="1"/>
</dbReference>
<dbReference type="PRINTS" id="PR00449">
    <property type="entry name" value="RASTRNSFRMNG"/>
</dbReference>
<dbReference type="SMART" id="SM00175">
    <property type="entry name" value="RAB"/>
    <property type="match status" value="1"/>
</dbReference>
<dbReference type="SMART" id="SM00176">
    <property type="entry name" value="RAN"/>
    <property type="match status" value="1"/>
</dbReference>
<dbReference type="SMART" id="SM00173">
    <property type="entry name" value="RAS"/>
    <property type="match status" value="1"/>
</dbReference>
<dbReference type="SMART" id="SM00174">
    <property type="entry name" value="RHO"/>
    <property type="match status" value="1"/>
</dbReference>
<dbReference type="SUPFAM" id="SSF52540">
    <property type="entry name" value="P-loop containing nucleoside triphosphate hydrolases"/>
    <property type="match status" value="1"/>
</dbReference>
<dbReference type="PROSITE" id="PS51421">
    <property type="entry name" value="RAS"/>
    <property type="match status" value="1"/>
</dbReference>
<accession>B4PUP5</accession>
<reference evidence="4" key="1">
    <citation type="journal article" date="2007" name="Nature">
        <title>Evolution of genes and genomes on the Drosophila phylogeny.</title>
        <authorList>
            <consortium name="Drosophila 12 genomes consortium"/>
        </authorList>
    </citation>
    <scope>NUCLEOTIDE SEQUENCE [LARGE SCALE GENOMIC DNA]</scope>
    <source>
        <strain evidence="4">Tai18E2 / Tucson 14021-0261.01</strain>
    </source>
</reference>
<keyword id="KW-1003">Cell membrane</keyword>
<keyword id="KW-0342">GTP-binding</keyword>
<keyword id="KW-0378">Hydrolase</keyword>
<keyword id="KW-0449">Lipoprotein</keyword>
<keyword id="KW-0472">Membrane</keyword>
<keyword id="KW-0488">Methylation</keyword>
<keyword id="KW-0547">Nucleotide-binding</keyword>
<keyword id="KW-0636">Prenylation</keyword>
<gene>
    <name evidence="2" type="primary">Ras85D</name>
    <name type="ORF">GE24771</name>
</gene>
<feature type="chain" id="PRO_0000363722" description="Ras-like protein 1" evidence="2">
    <location>
        <begin position="1"/>
        <end position="186"/>
    </location>
</feature>
<feature type="propeptide" id="PRO_0000363723" description="Removed in mature form" evidence="2">
    <location>
        <begin position="187"/>
        <end position="189"/>
    </location>
</feature>
<feature type="short sequence motif" description="Effector region">
    <location>
        <begin position="32"/>
        <end position="40"/>
    </location>
</feature>
<feature type="binding site" evidence="1">
    <location>
        <begin position="10"/>
        <end position="17"/>
    </location>
    <ligand>
        <name>GTP</name>
        <dbReference type="ChEBI" id="CHEBI:37565"/>
    </ligand>
</feature>
<feature type="binding site" evidence="1">
    <location>
        <begin position="57"/>
        <end position="61"/>
    </location>
    <ligand>
        <name>GTP</name>
        <dbReference type="ChEBI" id="CHEBI:37565"/>
    </ligand>
</feature>
<feature type="binding site" evidence="1">
    <location>
        <begin position="116"/>
        <end position="119"/>
    </location>
    <ligand>
        <name>GTP</name>
        <dbReference type="ChEBI" id="CHEBI:37565"/>
    </ligand>
</feature>
<feature type="modified residue" description="Cysteine methyl ester" evidence="2">
    <location>
        <position position="186"/>
    </location>
</feature>
<feature type="lipid moiety-binding region" description="S-geranylgeranyl cysteine" evidence="2">
    <location>
        <position position="186"/>
    </location>
</feature>
<name>RAS1_DROYA</name>
<comment type="function">
    <text evidence="1 2">Ras proteins bind GDP/GTP and possess intrinsic GTPase activity. Plays a role in eye development by regulating cell growth, survival of postmitotic ommatidial cells and differentiation of photoreceptor cells. During larval development, mediates Ptth/tor signaling leading to the production of ecdysone, a hormone required for the initiation of metamorphosis.</text>
</comment>
<comment type="catalytic activity">
    <reaction evidence="1">
        <text>GTP + H2O = GDP + phosphate + H(+)</text>
        <dbReference type="Rhea" id="RHEA:19669"/>
        <dbReference type="ChEBI" id="CHEBI:15377"/>
        <dbReference type="ChEBI" id="CHEBI:15378"/>
        <dbReference type="ChEBI" id="CHEBI:37565"/>
        <dbReference type="ChEBI" id="CHEBI:43474"/>
        <dbReference type="ChEBI" id="CHEBI:58189"/>
        <dbReference type="EC" id="3.6.5.2"/>
    </reaction>
</comment>
<comment type="activity regulation">
    <text>Alternates between an inactive form bound to GDP and an active form bound to GTP. Activated by a guanine nucleotide-exchange factor (GEF) and inactivated by a GTPase-activating protein (GAP).</text>
</comment>
<comment type="subcellular location">
    <subcellularLocation>
        <location evidence="2">Cell membrane</location>
        <topology evidence="2">Lipid-anchor</topology>
        <orientation evidence="2">Cytoplasmic side</orientation>
    </subcellularLocation>
</comment>
<comment type="similarity">
    <text evidence="3">Belongs to the small GTPase superfamily. Ras family.</text>
</comment>
<protein>
    <recommendedName>
        <fullName evidence="2">Ras-like protein 1</fullName>
        <ecNumber evidence="1">3.6.5.2</ecNumber>
    </recommendedName>
</protein>